<name>Y057_RICCN</name>
<gene>
    <name type="ordered locus">RC0057</name>
</gene>
<protein>
    <recommendedName>
        <fullName>Uncharacterized protein RC0057</fullName>
    </recommendedName>
</protein>
<accession>Q92JL0</accession>
<sequence>MLGKNDIKNVHKKLNVAKDFQNFNDEHCNIVTLSKVINDEGKKHIVVEAEVAFKGLTEEQKQEYQNRDGKNWYNVMPECERKLVDQYTDTI</sequence>
<proteinExistence type="predicted"/>
<feature type="chain" id="PRO_0000101445" description="Uncharacterized protein RC0057">
    <location>
        <begin position="1"/>
        <end position="91"/>
    </location>
</feature>
<reference key="1">
    <citation type="journal article" date="2001" name="Science">
        <title>Mechanisms of evolution in Rickettsia conorii and R. prowazekii.</title>
        <authorList>
            <person name="Ogata H."/>
            <person name="Audic S."/>
            <person name="Renesto-Audiffren P."/>
            <person name="Fournier P.-E."/>
            <person name="Barbe V."/>
            <person name="Samson D."/>
            <person name="Roux V."/>
            <person name="Cossart P."/>
            <person name="Weissenbach J."/>
            <person name="Claverie J.-M."/>
            <person name="Raoult D."/>
        </authorList>
    </citation>
    <scope>NUCLEOTIDE SEQUENCE [LARGE SCALE GENOMIC DNA]</scope>
    <source>
        <strain>ATCC VR-613 / Malish 7</strain>
    </source>
</reference>
<dbReference type="EMBL" id="AE006914">
    <property type="protein sequence ID" value="AAL02595.1"/>
    <property type="molecule type" value="Genomic_DNA"/>
</dbReference>
<dbReference type="PIR" id="A97707">
    <property type="entry name" value="A97707"/>
</dbReference>
<dbReference type="RefSeq" id="WP_010976743.1">
    <property type="nucleotide sequence ID" value="NC_003103.1"/>
</dbReference>
<dbReference type="GeneID" id="928608"/>
<dbReference type="KEGG" id="rco:RC0057"/>
<dbReference type="PATRIC" id="fig|272944.4.peg.68"/>
<dbReference type="HOGENOM" id="CLU_2424998_0_0_5"/>
<dbReference type="Proteomes" id="UP000000816">
    <property type="component" value="Chromosome"/>
</dbReference>
<organism>
    <name type="scientific">Rickettsia conorii (strain ATCC VR-613 / Malish 7)</name>
    <dbReference type="NCBI Taxonomy" id="272944"/>
    <lineage>
        <taxon>Bacteria</taxon>
        <taxon>Pseudomonadati</taxon>
        <taxon>Pseudomonadota</taxon>
        <taxon>Alphaproteobacteria</taxon>
        <taxon>Rickettsiales</taxon>
        <taxon>Rickettsiaceae</taxon>
        <taxon>Rickettsieae</taxon>
        <taxon>Rickettsia</taxon>
        <taxon>spotted fever group</taxon>
    </lineage>
</organism>